<accession>Q6GHF9</accession>
<reference key="1">
    <citation type="journal article" date="2004" name="Proc. Natl. Acad. Sci. U.S.A.">
        <title>Complete genomes of two clinical Staphylococcus aureus strains: evidence for the rapid evolution of virulence and drug resistance.</title>
        <authorList>
            <person name="Holden M.T.G."/>
            <person name="Feil E.J."/>
            <person name="Lindsay J.A."/>
            <person name="Peacock S.J."/>
            <person name="Day N.P.J."/>
            <person name="Enright M.C."/>
            <person name="Foster T.J."/>
            <person name="Moore C.E."/>
            <person name="Hurst L."/>
            <person name="Atkin R."/>
            <person name="Barron A."/>
            <person name="Bason N."/>
            <person name="Bentley S.D."/>
            <person name="Chillingworth C."/>
            <person name="Chillingworth T."/>
            <person name="Churcher C."/>
            <person name="Clark L."/>
            <person name="Corton C."/>
            <person name="Cronin A."/>
            <person name="Doggett J."/>
            <person name="Dowd L."/>
            <person name="Feltwell T."/>
            <person name="Hance Z."/>
            <person name="Harris B."/>
            <person name="Hauser H."/>
            <person name="Holroyd S."/>
            <person name="Jagels K."/>
            <person name="James K.D."/>
            <person name="Lennard N."/>
            <person name="Line A."/>
            <person name="Mayes R."/>
            <person name="Moule S."/>
            <person name="Mungall K."/>
            <person name="Ormond D."/>
            <person name="Quail M.A."/>
            <person name="Rabbinowitsch E."/>
            <person name="Rutherford K.M."/>
            <person name="Sanders M."/>
            <person name="Sharp S."/>
            <person name="Simmonds M."/>
            <person name="Stevens K."/>
            <person name="Whitehead S."/>
            <person name="Barrell B.G."/>
            <person name="Spratt B.G."/>
            <person name="Parkhill J."/>
        </authorList>
    </citation>
    <scope>NUCLEOTIDE SEQUENCE [LARGE SCALE GENOMIC DNA]</scope>
    <source>
        <strain>MRSA252</strain>
    </source>
</reference>
<sequence length="789" mass="88171">MAQAKKKSTAKKKTTSKKRTNSRKKKNDNPIRYVIAILVVVLMVLGVFQLGIIGRLIDSFFNYLFGYSRYLTYILVLLATGFITYSKRIPKTRRTAGSIVLQIALLFVSQLVFHFNSGIKAEREPVLSYVYQSYQHSHFPNFGGGVLGFYLLELSVPLISLFGVCIITILLLCSSVILLTNHQHRDVAKVALENIKAWFGSFNEKMSERNQEKQLKREEKARLKEEQKARQNEQPQIKDVSDFTEVPQERDIPIYGHTENESKSQSQPSRKKRVFDAENSSNNIVNHHQADQQEQLIEQTHNSVESENTIEEAGEVTNVSYVVPPLTLLNQPAKQKATSKAEVQRKGQVLENTLKDFGVNAKVTQIKIGPAVTQYEIQPAQGVKVSKIVNLHNDIALALAAKDVRIEAPIPGRSAVGIEVPNEKISLVSLKEVLDEKFPSNNKLEVGLGRDISGDPITVPLNEMPHLLVAGSTGSGKSVCINGIITSILLNAKPHEVKLMLIDPKMVELNVYNGIPHLLIPVVTNPHKAAQALEKIVAEMERRYDLFQHSSTRNIKGYNELIRKQNQELDEKQPELPYIVVIVDELADLMMVAGKEVENAIQRITQMARAAGIHLIVATQRPSVDVITGIIKNNIPSRIAFAVSSQTDSRTIIGTGGAEKLLGKGDMLYVGNGDSSQTRIQGAFLSDQEVQDVVNYVVEQQQANYVKEMEPDAPVDKSEMKSEDALYDEAYLFVVEQQKASTSLLQRQFRIGYNRASRLMDDLERNQVIGPQKGSKPRQVLIDLNNDEV</sequence>
<dbReference type="EMBL" id="BX571856">
    <property type="protein sequence ID" value="CAG40254.1"/>
    <property type="molecule type" value="Genomic_DNA"/>
</dbReference>
<dbReference type="RefSeq" id="WP_000035759.1">
    <property type="nucleotide sequence ID" value="NC_002952.2"/>
</dbReference>
<dbReference type="SMR" id="Q6GHF9"/>
<dbReference type="KEGG" id="sar:SAR1252"/>
<dbReference type="HOGENOM" id="CLU_001981_9_2_9"/>
<dbReference type="Proteomes" id="UP000000596">
    <property type="component" value="Chromosome"/>
</dbReference>
<dbReference type="GO" id="GO:0005886">
    <property type="term" value="C:plasma membrane"/>
    <property type="evidence" value="ECO:0007669"/>
    <property type="project" value="UniProtKB-SubCell"/>
</dbReference>
<dbReference type="GO" id="GO:0005524">
    <property type="term" value="F:ATP binding"/>
    <property type="evidence" value="ECO:0007669"/>
    <property type="project" value="UniProtKB-KW"/>
</dbReference>
<dbReference type="GO" id="GO:0016887">
    <property type="term" value="F:ATP hydrolysis activity"/>
    <property type="evidence" value="ECO:0007669"/>
    <property type="project" value="InterPro"/>
</dbReference>
<dbReference type="GO" id="GO:0003677">
    <property type="term" value="F:DNA binding"/>
    <property type="evidence" value="ECO:0007669"/>
    <property type="project" value="UniProtKB-KW"/>
</dbReference>
<dbReference type="GO" id="GO:0051301">
    <property type="term" value="P:cell division"/>
    <property type="evidence" value="ECO:0007669"/>
    <property type="project" value="UniProtKB-KW"/>
</dbReference>
<dbReference type="GO" id="GO:0007059">
    <property type="term" value="P:chromosome segregation"/>
    <property type="evidence" value="ECO:0007669"/>
    <property type="project" value="UniProtKB-KW"/>
</dbReference>
<dbReference type="CDD" id="cd01127">
    <property type="entry name" value="TrwB_TraG_TraD_VirD4"/>
    <property type="match status" value="1"/>
</dbReference>
<dbReference type="Gene3D" id="3.30.980.40">
    <property type="match status" value="1"/>
</dbReference>
<dbReference type="Gene3D" id="3.40.50.300">
    <property type="entry name" value="P-loop containing nucleotide triphosphate hydrolases"/>
    <property type="match status" value="1"/>
</dbReference>
<dbReference type="Gene3D" id="1.10.10.10">
    <property type="entry name" value="Winged helix-like DNA-binding domain superfamily/Winged helix DNA-binding domain"/>
    <property type="match status" value="1"/>
</dbReference>
<dbReference type="InterPro" id="IPR003593">
    <property type="entry name" value="AAA+_ATPase"/>
</dbReference>
<dbReference type="InterPro" id="IPR050206">
    <property type="entry name" value="FtsK/SpoIIIE/SftA"/>
</dbReference>
<dbReference type="InterPro" id="IPR041027">
    <property type="entry name" value="FtsK_alpha"/>
</dbReference>
<dbReference type="InterPro" id="IPR002543">
    <property type="entry name" value="FtsK_dom"/>
</dbReference>
<dbReference type="InterPro" id="IPR018541">
    <property type="entry name" value="Ftsk_gamma"/>
</dbReference>
<dbReference type="InterPro" id="IPR027417">
    <property type="entry name" value="P-loop_NTPase"/>
</dbReference>
<dbReference type="InterPro" id="IPR036388">
    <property type="entry name" value="WH-like_DNA-bd_sf"/>
</dbReference>
<dbReference type="InterPro" id="IPR036390">
    <property type="entry name" value="WH_DNA-bd_sf"/>
</dbReference>
<dbReference type="PANTHER" id="PTHR22683:SF41">
    <property type="entry name" value="DNA TRANSLOCASE FTSK"/>
    <property type="match status" value="1"/>
</dbReference>
<dbReference type="PANTHER" id="PTHR22683">
    <property type="entry name" value="SPORULATION PROTEIN RELATED"/>
    <property type="match status" value="1"/>
</dbReference>
<dbReference type="Pfam" id="PF17854">
    <property type="entry name" value="FtsK_alpha"/>
    <property type="match status" value="1"/>
</dbReference>
<dbReference type="Pfam" id="PF09397">
    <property type="entry name" value="FtsK_gamma"/>
    <property type="match status" value="1"/>
</dbReference>
<dbReference type="Pfam" id="PF01580">
    <property type="entry name" value="FtsK_SpoIIIE"/>
    <property type="match status" value="1"/>
</dbReference>
<dbReference type="SMART" id="SM00382">
    <property type="entry name" value="AAA"/>
    <property type="match status" value="1"/>
</dbReference>
<dbReference type="SMART" id="SM00843">
    <property type="entry name" value="Ftsk_gamma"/>
    <property type="match status" value="1"/>
</dbReference>
<dbReference type="SUPFAM" id="SSF52540">
    <property type="entry name" value="P-loop containing nucleoside triphosphate hydrolases"/>
    <property type="match status" value="1"/>
</dbReference>
<dbReference type="SUPFAM" id="SSF46785">
    <property type="entry name" value="Winged helix' DNA-binding domain"/>
    <property type="match status" value="1"/>
</dbReference>
<dbReference type="PROSITE" id="PS50901">
    <property type="entry name" value="FTSK"/>
    <property type="match status" value="1"/>
</dbReference>
<protein>
    <recommendedName>
        <fullName>DNA translocase FtsK</fullName>
    </recommendedName>
</protein>
<gene>
    <name type="primary">ftsK</name>
    <name type="ordered locus">SAR1252</name>
</gene>
<evidence type="ECO:0000250" key="1"/>
<evidence type="ECO:0000255" key="2"/>
<evidence type="ECO:0000255" key="3">
    <source>
        <dbReference type="PROSITE-ProRule" id="PRU00289"/>
    </source>
</evidence>
<evidence type="ECO:0000256" key="4">
    <source>
        <dbReference type="SAM" id="MobiDB-lite"/>
    </source>
</evidence>
<evidence type="ECO:0000305" key="5"/>
<feature type="chain" id="PRO_0000098296" description="DNA translocase FtsK">
    <location>
        <begin position="1"/>
        <end position="789"/>
    </location>
</feature>
<feature type="transmembrane region" description="Helical" evidence="2">
    <location>
        <begin position="34"/>
        <end position="54"/>
    </location>
</feature>
<feature type="transmembrane region" description="Helical" evidence="2">
    <location>
        <begin position="63"/>
        <end position="83"/>
    </location>
</feature>
<feature type="transmembrane region" description="Helical" evidence="2">
    <location>
        <begin position="99"/>
        <end position="119"/>
    </location>
</feature>
<feature type="transmembrane region" description="Helical" evidence="2">
    <location>
        <begin position="137"/>
        <end position="157"/>
    </location>
</feature>
<feature type="transmembrane region" description="Helical" evidence="2">
    <location>
        <begin position="158"/>
        <end position="178"/>
    </location>
</feature>
<feature type="topological domain" description="Cytoplasmic" evidence="2">
    <location>
        <begin position="179"/>
        <end position="789"/>
    </location>
</feature>
<feature type="domain" description="FtsK" evidence="3">
    <location>
        <begin position="454"/>
        <end position="650"/>
    </location>
</feature>
<feature type="region of interest" description="Disordered" evidence="4">
    <location>
        <begin position="1"/>
        <end position="25"/>
    </location>
</feature>
<feature type="region of interest" description="Disordered" evidence="4">
    <location>
        <begin position="209"/>
        <end position="275"/>
    </location>
</feature>
<feature type="compositionally biased region" description="Basic and acidic residues" evidence="4">
    <location>
        <begin position="209"/>
        <end position="231"/>
    </location>
</feature>
<feature type="compositionally biased region" description="Basic and acidic residues" evidence="4">
    <location>
        <begin position="247"/>
        <end position="262"/>
    </location>
</feature>
<feature type="binding site" evidence="3">
    <location>
        <begin position="474"/>
        <end position="479"/>
    </location>
    <ligand>
        <name>ATP</name>
        <dbReference type="ChEBI" id="CHEBI:30616"/>
    </ligand>
</feature>
<keyword id="KW-0067">ATP-binding</keyword>
<keyword id="KW-0131">Cell cycle</keyword>
<keyword id="KW-0132">Cell division</keyword>
<keyword id="KW-1003">Cell membrane</keyword>
<keyword id="KW-0159">Chromosome partition</keyword>
<keyword id="KW-0238">DNA-binding</keyword>
<keyword id="KW-0472">Membrane</keyword>
<keyword id="KW-0547">Nucleotide-binding</keyword>
<keyword id="KW-0812">Transmembrane</keyword>
<keyword id="KW-1133">Transmembrane helix</keyword>
<comment type="function">
    <text evidence="1">Essential cell division protein that coordinates cell division and chromosome segregation. The N-terminus is involved in assembly of the cell-division machinery. The C-terminus functions as a DNA motor that moves dsDNA in an ATP-dependent manner towards the dif recombination site, which is located within the replication terminus region. Required for activation of the Xer recombinase, allowing activation of chromosome unlinking by recombination (By similarity).</text>
</comment>
<comment type="subunit">
    <text evidence="1">Homohexamer. Forms a ring that surrounds DNA (By similarity).</text>
</comment>
<comment type="subcellular location">
    <subcellularLocation>
        <location evidence="1">Cell membrane</location>
        <topology evidence="1">Multi-pass membrane protein</topology>
    </subcellularLocation>
    <text evidence="1">Located at the septum.</text>
</comment>
<comment type="domain">
    <text evidence="1">Consists of an N-terminal domain, which is sufficient for the localization to the septal ring and is required for cell division, followed by a linker domain, and a C-terminal domain, which forms the translocation motor involved in chromosome segregation. The C-terminal domain can be further subdivided into alpha, beta and gamma subdomains. The alpha and beta subdomains form the DNA pump, and the gamma subdomain is a regulatory subdomain (By similarity).</text>
</comment>
<comment type="similarity">
    <text evidence="5">Belongs to the FtsK/SpoIIIE/SftA family.</text>
</comment>
<organism>
    <name type="scientific">Staphylococcus aureus (strain MRSA252)</name>
    <dbReference type="NCBI Taxonomy" id="282458"/>
    <lineage>
        <taxon>Bacteria</taxon>
        <taxon>Bacillati</taxon>
        <taxon>Bacillota</taxon>
        <taxon>Bacilli</taxon>
        <taxon>Bacillales</taxon>
        <taxon>Staphylococcaceae</taxon>
        <taxon>Staphylococcus</taxon>
    </lineage>
</organism>
<name>FTSK_STAAR</name>
<proteinExistence type="inferred from homology"/>